<feature type="chain" id="PRO_0000231176" description="UDP-N-acetylglucosamine 1-carboxyvinyltransferase">
    <location>
        <begin position="1"/>
        <end position="422"/>
    </location>
</feature>
<feature type="active site" description="Proton donor" evidence="1">
    <location>
        <position position="117"/>
    </location>
</feature>
<feature type="binding site" evidence="1">
    <location>
        <begin position="22"/>
        <end position="23"/>
    </location>
    <ligand>
        <name>phosphoenolpyruvate</name>
        <dbReference type="ChEBI" id="CHEBI:58702"/>
    </ligand>
</feature>
<feature type="binding site" evidence="1">
    <location>
        <position position="93"/>
    </location>
    <ligand>
        <name>UDP-N-acetyl-alpha-D-glucosamine</name>
        <dbReference type="ChEBI" id="CHEBI:57705"/>
    </ligand>
</feature>
<feature type="binding site" evidence="1">
    <location>
        <begin position="122"/>
        <end position="126"/>
    </location>
    <ligand>
        <name>UDP-N-acetyl-alpha-D-glucosamine</name>
        <dbReference type="ChEBI" id="CHEBI:57705"/>
    </ligand>
</feature>
<feature type="binding site" evidence="1">
    <location>
        <position position="305"/>
    </location>
    <ligand>
        <name>UDP-N-acetyl-alpha-D-glucosamine</name>
        <dbReference type="ChEBI" id="CHEBI:57705"/>
    </ligand>
</feature>
<feature type="binding site" evidence="1">
    <location>
        <position position="327"/>
    </location>
    <ligand>
        <name>UDP-N-acetyl-alpha-D-glucosamine</name>
        <dbReference type="ChEBI" id="CHEBI:57705"/>
    </ligand>
</feature>
<feature type="modified residue" description="2-(S-cysteinyl)pyruvic acid O-phosphothioketal" evidence="1">
    <location>
        <position position="117"/>
    </location>
</feature>
<accession>Q7VSZ3</accession>
<proteinExistence type="inferred from homology"/>
<comment type="function">
    <text evidence="1">Cell wall formation. Adds enolpyruvyl to UDP-N-acetylglucosamine.</text>
</comment>
<comment type="catalytic activity">
    <reaction evidence="1">
        <text>phosphoenolpyruvate + UDP-N-acetyl-alpha-D-glucosamine = UDP-N-acetyl-3-O-(1-carboxyvinyl)-alpha-D-glucosamine + phosphate</text>
        <dbReference type="Rhea" id="RHEA:18681"/>
        <dbReference type="ChEBI" id="CHEBI:43474"/>
        <dbReference type="ChEBI" id="CHEBI:57705"/>
        <dbReference type="ChEBI" id="CHEBI:58702"/>
        <dbReference type="ChEBI" id="CHEBI:68483"/>
        <dbReference type="EC" id="2.5.1.7"/>
    </reaction>
</comment>
<comment type="pathway">
    <text evidence="1">Cell wall biogenesis; peptidoglycan biosynthesis.</text>
</comment>
<comment type="subcellular location">
    <subcellularLocation>
        <location evidence="1">Cytoplasm</location>
    </subcellularLocation>
</comment>
<comment type="similarity">
    <text evidence="1">Belongs to the EPSP synthase family. MurA subfamily.</text>
</comment>
<dbReference type="EC" id="2.5.1.7" evidence="1"/>
<dbReference type="EMBL" id="BX640422">
    <property type="protein sequence ID" value="CAE44022.1"/>
    <property type="molecule type" value="Genomic_DNA"/>
</dbReference>
<dbReference type="RefSeq" id="NP_882267.1">
    <property type="nucleotide sequence ID" value="NC_002929.2"/>
</dbReference>
<dbReference type="RefSeq" id="WP_010927222.1">
    <property type="nucleotide sequence ID" value="NZ_CP039022.1"/>
</dbReference>
<dbReference type="SMR" id="Q7VSZ3"/>
<dbReference type="STRING" id="257313.BP3766"/>
<dbReference type="PaxDb" id="257313-BP3766"/>
<dbReference type="GeneID" id="69600007"/>
<dbReference type="KEGG" id="bpe:BP3766"/>
<dbReference type="PATRIC" id="fig|257313.5.peg.4070"/>
<dbReference type="eggNOG" id="COG0766">
    <property type="taxonomic scope" value="Bacteria"/>
</dbReference>
<dbReference type="HOGENOM" id="CLU_027387_0_0_4"/>
<dbReference type="UniPathway" id="UPA00219"/>
<dbReference type="Proteomes" id="UP000002676">
    <property type="component" value="Chromosome"/>
</dbReference>
<dbReference type="GO" id="GO:0005737">
    <property type="term" value="C:cytoplasm"/>
    <property type="evidence" value="ECO:0007669"/>
    <property type="project" value="UniProtKB-SubCell"/>
</dbReference>
<dbReference type="GO" id="GO:0008760">
    <property type="term" value="F:UDP-N-acetylglucosamine 1-carboxyvinyltransferase activity"/>
    <property type="evidence" value="ECO:0007669"/>
    <property type="project" value="UniProtKB-UniRule"/>
</dbReference>
<dbReference type="GO" id="GO:0051301">
    <property type="term" value="P:cell division"/>
    <property type="evidence" value="ECO:0007669"/>
    <property type="project" value="UniProtKB-KW"/>
</dbReference>
<dbReference type="GO" id="GO:0071555">
    <property type="term" value="P:cell wall organization"/>
    <property type="evidence" value="ECO:0007669"/>
    <property type="project" value="UniProtKB-KW"/>
</dbReference>
<dbReference type="GO" id="GO:0009252">
    <property type="term" value="P:peptidoglycan biosynthetic process"/>
    <property type="evidence" value="ECO:0007669"/>
    <property type="project" value="UniProtKB-UniRule"/>
</dbReference>
<dbReference type="GO" id="GO:0008360">
    <property type="term" value="P:regulation of cell shape"/>
    <property type="evidence" value="ECO:0007669"/>
    <property type="project" value="UniProtKB-KW"/>
</dbReference>
<dbReference type="GO" id="GO:0019277">
    <property type="term" value="P:UDP-N-acetylgalactosamine biosynthetic process"/>
    <property type="evidence" value="ECO:0007669"/>
    <property type="project" value="InterPro"/>
</dbReference>
<dbReference type="CDD" id="cd01555">
    <property type="entry name" value="UdpNAET"/>
    <property type="match status" value="1"/>
</dbReference>
<dbReference type="FunFam" id="3.65.10.10:FF:000001">
    <property type="entry name" value="UDP-N-acetylglucosamine 1-carboxyvinyltransferase"/>
    <property type="match status" value="1"/>
</dbReference>
<dbReference type="Gene3D" id="3.65.10.10">
    <property type="entry name" value="Enolpyruvate transferase domain"/>
    <property type="match status" value="2"/>
</dbReference>
<dbReference type="HAMAP" id="MF_00111">
    <property type="entry name" value="MurA"/>
    <property type="match status" value="1"/>
</dbReference>
<dbReference type="InterPro" id="IPR001986">
    <property type="entry name" value="Enolpyruvate_Tfrase_dom"/>
</dbReference>
<dbReference type="InterPro" id="IPR036968">
    <property type="entry name" value="Enolpyruvate_Tfrase_sf"/>
</dbReference>
<dbReference type="InterPro" id="IPR050068">
    <property type="entry name" value="MurA_subfamily"/>
</dbReference>
<dbReference type="InterPro" id="IPR013792">
    <property type="entry name" value="RNA3'P_cycl/enolpyr_Trfase_a/b"/>
</dbReference>
<dbReference type="InterPro" id="IPR005750">
    <property type="entry name" value="UDP_GlcNAc_COvinyl_MurA"/>
</dbReference>
<dbReference type="NCBIfam" id="TIGR01072">
    <property type="entry name" value="murA"/>
    <property type="match status" value="1"/>
</dbReference>
<dbReference type="NCBIfam" id="NF006873">
    <property type="entry name" value="PRK09369.1"/>
    <property type="match status" value="1"/>
</dbReference>
<dbReference type="PANTHER" id="PTHR43783">
    <property type="entry name" value="UDP-N-ACETYLGLUCOSAMINE 1-CARBOXYVINYLTRANSFERASE"/>
    <property type="match status" value="1"/>
</dbReference>
<dbReference type="PANTHER" id="PTHR43783:SF1">
    <property type="entry name" value="UDP-N-ACETYLGLUCOSAMINE 1-CARBOXYVINYLTRANSFERASE"/>
    <property type="match status" value="1"/>
</dbReference>
<dbReference type="Pfam" id="PF00275">
    <property type="entry name" value="EPSP_synthase"/>
    <property type="match status" value="1"/>
</dbReference>
<dbReference type="SUPFAM" id="SSF55205">
    <property type="entry name" value="EPT/RTPC-like"/>
    <property type="match status" value="1"/>
</dbReference>
<reference key="1">
    <citation type="journal article" date="2003" name="Nat. Genet.">
        <title>Comparative analysis of the genome sequences of Bordetella pertussis, Bordetella parapertussis and Bordetella bronchiseptica.</title>
        <authorList>
            <person name="Parkhill J."/>
            <person name="Sebaihia M."/>
            <person name="Preston A."/>
            <person name="Murphy L.D."/>
            <person name="Thomson N.R."/>
            <person name="Harris D.E."/>
            <person name="Holden M.T.G."/>
            <person name="Churcher C.M."/>
            <person name="Bentley S.D."/>
            <person name="Mungall K.L."/>
            <person name="Cerdeno-Tarraga A.-M."/>
            <person name="Temple L."/>
            <person name="James K.D."/>
            <person name="Harris B."/>
            <person name="Quail M.A."/>
            <person name="Achtman M."/>
            <person name="Atkin R."/>
            <person name="Baker S."/>
            <person name="Basham D."/>
            <person name="Bason N."/>
            <person name="Cherevach I."/>
            <person name="Chillingworth T."/>
            <person name="Collins M."/>
            <person name="Cronin A."/>
            <person name="Davis P."/>
            <person name="Doggett J."/>
            <person name="Feltwell T."/>
            <person name="Goble A."/>
            <person name="Hamlin N."/>
            <person name="Hauser H."/>
            <person name="Holroyd S."/>
            <person name="Jagels K."/>
            <person name="Leather S."/>
            <person name="Moule S."/>
            <person name="Norberczak H."/>
            <person name="O'Neil S."/>
            <person name="Ormond D."/>
            <person name="Price C."/>
            <person name="Rabbinowitsch E."/>
            <person name="Rutter S."/>
            <person name="Sanders M."/>
            <person name="Saunders D."/>
            <person name="Seeger K."/>
            <person name="Sharp S."/>
            <person name="Simmonds M."/>
            <person name="Skelton J."/>
            <person name="Squares R."/>
            <person name="Squares S."/>
            <person name="Stevens K."/>
            <person name="Unwin L."/>
            <person name="Whitehead S."/>
            <person name="Barrell B.G."/>
            <person name="Maskell D.J."/>
        </authorList>
    </citation>
    <scope>NUCLEOTIDE SEQUENCE [LARGE SCALE GENOMIC DNA]</scope>
    <source>
        <strain>Tohama I / ATCC BAA-589 / NCTC 13251</strain>
    </source>
</reference>
<protein>
    <recommendedName>
        <fullName evidence="1">UDP-N-acetylglucosamine 1-carboxyvinyltransferase</fullName>
        <ecNumber evidence="1">2.5.1.7</ecNumber>
    </recommendedName>
    <alternativeName>
        <fullName evidence="1">Enoylpyruvate transferase</fullName>
    </alternativeName>
    <alternativeName>
        <fullName evidence="1">UDP-N-acetylglucosamine enolpyruvyl transferase</fullName>
        <shortName evidence="1">EPT</shortName>
    </alternativeName>
</protein>
<organism>
    <name type="scientific">Bordetella pertussis (strain Tohama I / ATCC BAA-589 / NCTC 13251)</name>
    <dbReference type="NCBI Taxonomy" id="257313"/>
    <lineage>
        <taxon>Bacteria</taxon>
        <taxon>Pseudomonadati</taxon>
        <taxon>Pseudomonadota</taxon>
        <taxon>Betaproteobacteria</taxon>
        <taxon>Burkholderiales</taxon>
        <taxon>Alcaligenaceae</taxon>
        <taxon>Bordetella</taxon>
    </lineage>
</organism>
<gene>
    <name evidence="1" type="primary">murA</name>
    <name type="synonym">murZ</name>
    <name type="ordered locus">BP3766</name>
</gene>
<sequence length="422" mass="44441">MDKLRITGGSPLRGEVTVSGAKNAALPILCASLLTAEPLVLGNVPQLNDTSTTLRLLGRMGVRAERAGDGTVTLQADQVDNLEAPYELVKTMRASILVLGPLLARFGQARVSLPGGCAIGQRPVDQHIKGLAALGAEIEIEHGFVVARATRLKGASIRTDMVTVTGTENLLMAAVLAEGQTVLENAAREPEVVDLAELLIKMGARIQGHGTDRIVVDGVARLHGARHDVIADRIEAGTFLCAVGAAGGDITLRGAAPDTMGATLDKLVEAGLTIETGPDWIRGAMHGRPRAVGARTHEYPGFATDMQAQLMALDTVADGTAVIVENIFENRYMHVQELCRLGADIDIDGHTAVVRGVARLSGATVMATDLRASASLVIAGLAAEGETLVDRIYHLDRGYDRMEVKLRALGASIQRVTGKETA</sequence>
<evidence type="ECO:0000255" key="1">
    <source>
        <dbReference type="HAMAP-Rule" id="MF_00111"/>
    </source>
</evidence>
<keyword id="KW-0131">Cell cycle</keyword>
<keyword id="KW-0132">Cell division</keyword>
<keyword id="KW-0133">Cell shape</keyword>
<keyword id="KW-0961">Cell wall biogenesis/degradation</keyword>
<keyword id="KW-0963">Cytoplasm</keyword>
<keyword id="KW-0573">Peptidoglycan synthesis</keyword>
<keyword id="KW-0670">Pyruvate</keyword>
<keyword id="KW-1185">Reference proteome</keyword>
<keyword id="KW-0808">Transferase</keyword>
<name>MURA_BORPE</name>